<gene>
    <name type="primary">CFHR5</name>
    <name type="synonym">CFHL5</name>
    <name type="synonym">FHR5</name>
</gene>
<organism>
    <name type="scientific">Homo sapiens</name>
    <name type="common">Human</name>
    <dbReference type="NCBI Taxonomy" id="9606"/>
    <lineage>
        <taxon>Eukaryota</taxon>
        <taxon>Metazoa</taxon>
        <taxon>Chordata</taxon>
        <taxon>Craniata</taxon>
        <taxon>Vertebrata</taxon>
        <taxon>Euteleostomi</taxon>
        <taxon>Mammalia</taxon>
        <taxon>Eutheria</taxon>
        <taxon>Euarchontoglires</taxon>
        <taxon>Primates</taxon>
        <taxon>Haplorrhini</taxon>
        <taxon>Catarrhini</taxon>
        <taxon>Hominidae</taxon>
        <taxon>Homo</taxon>
    </lineage>
</organism>
<reference key="1">
    <citation type="journal article" date="2001" name="J. Biol. Chem.">
        <title>Human factor H-related protein 5 (FHR-5). A new complement-associated protein.</title>
        <authorList>
            <person name="McRae J.L."/>
            <person name="Cowan P.J."/>
            <person name="Power D.A."/>
            <person name="Mitchelhill K.I."/>
            <person name="Kemp B.E."/>
            <person name="Morgan B.P."/>
            <person name="Murphy B.F."/>
        </authorList>
    </citation>
    <scope>NUCLEOTIDE SEQUENCE [MRNA]</scope>
    <scope>PARTIAL PROTEIN SEQUENCE</scope>
    <source>
        <tissue>Liver</tissue>
    </source>
</reference>
<reference key="2">
    <citation type="journal article" date="2004" name="Genome Res.">
        <title>The status, quality, and expansion of the NIH full-length cDNA project: the Mammalian Gene Collection (MGC).</title>
        <authorList>
            <consortium name="The MGC Project Team"/>
        </authorList>
    </citation>
    <scope>NUCLEOTIDE SEQUENCE [LARGE SCALE MRNA]</scope>
</reference>
<reference key="3">
    <citation type="journal article" date="2010" name="Lancet">
        <title>Identification of a mutation in complement factor H-related protein 5 in patients of Cypriot origin with glomerulonephritis.</title>
        <authorList>
            <person name="Gale D.P."/>
            <person name="de Jorge E.G."/>
            <person name="Cook H.T."/>
            <person name="Martinez-Barricarte R."/>
            <person name="Hadjisavvas A."/>
            <person name="McLean A.G."/>
            <person name="Pusey C.D."/>
            <person name="Pierides A."/>
            <person name="Kyriacou K."/>
            <person name="Athanasiou Y."/>
            <person name="Voskarides K."/>
            <person name="Deltas C."/>
            <person name="Palmer A."/>
            <person name="Fremeaux-Bacchi V."/>
            <person name="de Cordoba S.R."/>
            <person name="Maxwell P.H."/>
            <person name="Pickering M.C."/>
        </authorList>
    </citation>
    <scope>INVOLVEMENT IN CFHR5D</scope>
</reference>
<reference key="4">
    <citation type="journal article" date="2012" name="Am. J. Kidney Dis.">
        <title>Acute presentation and persistent glomerulonephritis following streptococcal infection in a patient with heterozygous complement factor H-related protein 5 deficiency.</title>
        <authorList>
            <person name="Vernon K.A."/>
            <person name="Goicoechea de Jorge E."/>
            <person name="Hall A.E."/>
            <person name="Fremeaux-Bacchi V."/>
            <person name="Aitman T.J."/>
            <person name="Cook H.T."/>
            <person name="Hangartner R."/>
            <person name="Koziell A."/>
            <person name="Pickering M.C."/>
        </authorList>
    </citation>
    <scope>INVOLVEMENT IN CFHR5D</scope>
</reference>
<reference key="5">
    <citation type="journal article" date="2013" name="Proc. Natl. Acad. Sci. U.S.A.">
        <title>Dimerization of complement factor H-related proteins modulates complement activation in vivo.</title>
        <authorList>
            <person name="Goicoechea de Jorge E."/>
            <person name="Caesar J.J."/>
            <person name="Malik T.H."/>
            <person name="Patel M."/>
            <person name="Colledge M."/>
            <person name="Johnson S."/>
            <person name="Hakobyan S."/>
            <person name="Morgan B.P."/>
            <person name="Harris C.L."/>
            <person name="Pickering M.C."/>
            <person name="Lea S.M."/>
        </authorList>
    </citation>
    <scope>FUNCTION</scope>
    <scope>SUBUNIT</scope>
</reference>
<reference key="6">
    <citation type="journal article" date="2006" name="Science">
        <title>The consensus coding sequences of human breast and colorectal cancers.</title>
        <authorList>
            <person name="Sjoeblom T."/>
            <person name="Jones S."/>
            <person name="Wood L.D."/>
            <person name="Parsons D.W."/>
            <person name="Lin J."/>
            <person name="Barber T.D."/>
            <person name="Mandelker D."/>
            <person name="Leary R.J."/>
            <person name="Ptak J."/>
            <person name="Silliman N."/>
            <person name="Szabo S."/>
            <person name="Buckhaults P."/>
            <person name="Farrell C."/>
            <person name="Meeh P."/>
            <person name="Markowitz S.D."/>
            <person name="Willis J."/>
            <person name="Dawson D."/>
            <person name="Willson J.K.V."/>
            <person name="Gazdar A.F."/>
            <person name="Hartigan J."/>
            <person name="Wu L."/>
            <person name="Liu C."/>
            <person name="Parmigiani G."/>
            <person name="Park B.H."/>
            <person name="Bachman K.E."/>
            <person name="Papadopoulos N."/>
            <person name="Vogelstein B."/>
            <person name="Kinzler K.W."/>
            <person name="Velculescu V.E."/>
        </authorList>
    </citation>
    <scope>VARIANT [LARGE SCALE ANALYSIS] SER-216</scope>
</reference>
<reference key="7">
    <citation type="journal article" date="2010" name="Hum. Mutat.">
        <title>Mutations in alternative pathway complement proteins in American patients with atypical hemolytic uremic syndrome.</title>
        <authorList>
            <person name="Maga T.K."/>
            <person name="Nishimura C.J."/>
            <person name="Weaver A.E."/>
            <person name="Frees K.L."/>
            <person name="Smith R.J.H."/>
        </authorList>
    </citation>
    <scope>VARIANTS ASN-277 AND LEU-379</scope>
    <scope>POSSIBLE INVOLVEMENT IN ATYPICAL HEMOLYTIC UREMIC SYNDROME</scope>
</reference>
<reference key="8">
    <citation type="journal article" date="2012" name="J. Hum. Genet.">
        <title>Atypical hemolytic uremic syndrome and genetic aberrations in the complement factor H-related 5 gene.</title>
        <authorList>
            <person name="Westra D."/>
            <person name="Vernon K.A."/>
            <person name="Volokhina E.B."/>
            <person name="Pickering M.C."/>
            <person name="van de Kar N.C."/>
            <person name="van den Heuvel L.P."/>
        </authorList>
    </citation>
    <scope>VARIANTS ARG-105; THR-195 AND CYS-436</scope>
    <scope>POSSIBLE INVOLVEMENT IN ATYPICAL HEMOLYTIC UREMIC SYNDROME</scope>
</reference>
<evidence type="ECO:0000255" key="1"/>
<evidence type="ECO:0000255" key="2">
    <source>
        <dbReference type="PROSITE-ProRule" id="PRU00302"/>
    </source>
</evidence>
<evidence type="ECO:0000269" key="3">
    <source>
    </source>
</evidence>
<evidence type="ECO:0000269" key="4">
    <source>
    </source>
</evidence>
<evidence type="ECO:0000269" key="5">
    <source>
    </source>
</evidence>
<evidence type="ECO:0000269" key="6">
    <source>
    </source>
</evidence>
<evidence type="ECO:0000269" key="7">
    <source>
    </source>
</evidence>
<evidence type="ECO:0000269" key="8">
    <source>
    </source>
</evidence>
<proteinExistence type="evidence at protein level"/>
<comment type="function">
    <text evidence="8">Involved in complement regulation. The dimerized forms have avidity for tissue-bound complement fragments and efficiently compete with the physiological complement inhibitor CFH.</text>
</comment>
<comment type="subunit">
    <text evidence="8">Head-to-tail homodimer and heterodimer with CFHR1 or CFHR2. Binds C3b in vitro.</text>
</comment>
<comment type="interaction">
    <interactant intactId="EBI-11579371">
        <id>Q9BXR6</id>
    </interactant>
    <interactant intactId="EBI-11343438">
        <id>Q3SXY8</id>
        <label>ARL13B</label>
    </interactant>
    <organismsDiffer>false</organismsDiffer>
    <experiments>3</experiments>
</comment>
<comment type="interaction">
    <interactant intactId="EBI-11579371">
        <id>Q9BXR6</id>
    </interactant>
    <interactant intactId="EBI-3935840">
        <id>Q03591</id>
        <label>CFHR1</label>
    </interactant>
    <organismsDiffer>false</organismsDiffer>
    <experiments>3</experiments>
</comment>
<comment type="interaction">
    <interactant intactId="EBI-11579371">
        <id>Q9BXR6</id>
    </interactant>
    <interactant intactId="EBI-1045797">
        <id>Q8N5K1</id>
        <label>CISD2</label>
    </interactant>
    <organismsDiffer>false</organismsDiffer>
    <experiments>3</experiments>
</comment>
<comment type="interaction">
    <interactant intactId="EBI-11579371">
        <id>Q9BXR6</id>
    </interactant>
    <interactant intactId="EBI-625022">
        <id>O43889-2</id>
        <label>CREB3</label>
    </interactant>
    <organismsDiffer>false</organismsDiffer>
    <experiments>3</experiments>
</comment>
<comment type="interaction">
    <interactant intactId="EBI-11579371">
        <id>Q9BXR6</id>
    </interactant>
    <interactant intactId="EBI-6942903">
        <id>Q96BA8</id>
        <label>CREB3L1</label>
    </interactant>
    <organismsDiffer>false</organismsDiffer>
    <experiments>6</experiments>
</comment>
<comment type="interaction">
    <interactant intactId="EBI-11579371">
        <id>Q9BXR6</id>
    </interactant>
    <interactant intactId="EBI-8787095">
        <id>O00559</id>
        <label>EBAG9</label>
    </interactant>
    <organismsDiffer>false</organismsDiffer>
    <experiments>3</experiments>
</comment>
<comment type="interaction">
    <interactant intactId="EBI-11579371">
        <id>Q9BXR6</id>
    </interactant>
    <interactant intactId="EBI-781551">
        <id>Q9Y282</id>
        <label>ERGIC3</label>
    </interactant>
    <organismsDiffer>false</organismsDiffer>
    <experiments>3</experiments>
</comment>
<comment type="interaction">
    <interactant intactId="EBI-11579371">
        <id>Q9BXR6</id>
    </interactant>
    <interactant intactId="EBI-2833872">
        <id>O15552</id>
        <label>FFAR2</label>
    </interactant>
    <organismsDiffer>false</organismsDiffer>
    <experiments>3</experiments>
</comment>
<comment type="interaction">
    <interactant intactId="EBI-11579371">
        <id>Q9BXR6</id>
    </interactant>
    <interactant intactId="EBI-11721746">
        <id>Q8TED1</id>
        <label>GPX8</label>
    </interactant>
    <organismsDiffer>false</organismsDiffer>
    <experiments>3</experiments>
</comment>
<comment type="interaction">
    <interactant intactId="EBI-11579371">
        <id>Q9BXR6</id>
    </interactant>
    <interactant intactId="EBI-23647813">
        <id>Q9Y2U2-2</id>
        <label>KCNK7</label>
    </interactant>
    <organismsDiffer>false</organismsDiffer>
    <experiments>3</experiments>
</comment>
<comment type="interaction">
    <interactant intactId="EBI-11579371">
        <id>Q9BXR6</id>
    </interactant>
    <interactant intactId="EBI-373355">
        <id>Q5SR56</id>
        <label>MFSD14B</label>
    </interactant>
    <organismsDiffer>false</organismsDiffer>
    <experiments>3</experiments>
</comment>
<comment type="interaction">
    <interactant intactId="EBI-11579371">
        <id>Q9BXR6</id>
    </interactant>
    <interactant intactId="EBI-7037612">
        <id>Q96RD7</id>
        <label>PANX1</label>
    </interactant>
    <organismsDiffer>false</organismsDiffer>
    <experiments>3</experiments>
</comment>
<comment type="interaction">
    <interactant intactId="EBI-11579371">
        <id>Q9BXR6</id>
    </interactant>
    <interactant intactId="EBI-3923031">
        <id>Q14973</id>
        <label>SLC10A1</label>
    </interactant>
    <organismsDiffer>false</organismsDiffer>
    <experiments>3</experiments>
</comment>
<comment type="interaction">
    <interactant intactId="EBI-11579371">
        <id>Q9BXR6</id>
    </interactant>
    <interactant intactId="EBI-18036244">
        <id>Q05940</id>
        <label>SLC18A2</label>
    </interactant>
    <organismsDiffer>false</organismsDiffer>
    <experiments>3</experiments>
</comment>
<comment type="interaction">
    <interactant intactId="EBI-11579371">
        <id>Q9BXR6</id>
    </interactant>
    <interactant intactId="EBI-7576138">
        <id>P02730</id>
        <label>SLC4A1</label>
    </interactant>
    <organismsDiffer>false</organismsDiffer>
    <experiments>3</experiments>
</comment>
<comment type="interaction">
    <interactant intactId="EBI-11579371">
        <id>Q9BXR6</id>
    </interactant>
    <interactant intactId="EBI-1211440">
        <id>P27105</id>
        <label>STOM</label>
    </interactant>
    <organismsDiffer>false</organismsDiffer>
    <experiments>3</experiments>
</comment>
<comment type="interaction">
    <interactant intactId="EBI-11579371">
        <id>Q9BXR6</id>
    </interactant>
    <interactant intactId="EBI-8638294">
        <id>Q9NUH8</id>
        <label>TMEM14B</label>
    </interactant>
    <organismsDiffer>false</organismsDiffer>
    <experiments>3</experiments>
</comment>
<comment type="interaction">
    <interactant intactId="EBI-11579371">
        <id>Q9BXR6</id>
    </interactant>
    <interactant intactId="EBI-10982110">
        <id>Q96Q45-2</id>
        <label>TMEM237</label>
    </interactant>
    <organismsDiffer>false</organismsDiffer>
    <experiments>3</experiments>
</comment>
<comment type="interaction">
    <interactant intactId="EBI-11579371">
        <id>Q9BXR6</id>
    </interactant>
    <interactant intactId="EBI-12345267">
        <id>O15393-2</id>
        <label>TMPRSS2</label>
    </interactant>
    <organismsDiffer>false</organismsDiffer>
    <experiments>3</experiments>
</comment>
<comment type="interaction">
    <interactant intactId="EBI-22114654">
        <id>PRO_0000005900</id>
    </interactant>
    <interactant intactId="EBI-1395983">
        <id>P02741</id>
        <label>CRP</label>
    </interactant>
    <organismsDiffer>false</organismsDiffer>
    <experiments>5</experiments>
</comment>
<comment type="subcellular location">
    <subcellularLocation>
        <location>Secreted</location>
    </subcellularLocation>
</comment>
<comment type="tissue specificity">
    <text>Expressed by the liver and secreted in plasma.</text>
</comment>
<comment type="disease">
    <text evidence="4 7">Defects in CFHR5 have been found in patients with atypical hemolytic uremic syndrome and may contribute to the disease. Atypical hemolytic uremic syndrome is a complex genetic disease characterized by microangiopathic hemolytic anemia, thrombocytopenia, renal failure and absence of episodes of enterocolitis and diarrhea. In contrast to typical hemolytic uremic syndrome, atypical forms have a poorer prognosis, with higher death rates and frequent progression to end-stage renal disease. Susceptibility to the development of atypical hemolytic uremic syndrome can be conferred by mutations in various components of or regulatory factors in the complement cascade system. Other genes may play a role in modifying the phenotype.</text>
</comment>
<comment type="disease" evidence="5 6">
    <disease id="DI-03555">
        <name>CFHR5 deficiency</name>
        <acronym>CFHR5D</acronym>
        <description>A progressive disease characterized by glomerulonephritis, hematuria, renal failure, end-stage renal disease, subendothelial and mesangial glomerular C3 deposits, mesangial matrix expansion, increased glomerular cellularity, and segmental capillary wall thickening. Hematuria may become apparent after respiratory infections.</description>
        <dbReference type="MIM" id="614809"/>
    </disease>
    <text>The disease is caused by variants affecting the gene represented in this entry.</text>
</comment>
<keyword id="KW-0903">Direct protein sequencing</keyword>
<keyword id="KW-0225">Disease variant</keyword>
<keyword id="KW-1015">Disulfide bond</keyword>
<keyword id="KW-0325">Glycoprotein</keyword>
<keyword id="KW-1068">Hemolytic uremic syndrome</keyword>
<keyword id="KW-1267">Proteomics identification</keyword>
<keyword id="KW-1185">Reference proteome</keyword>
<keyword id="KW-0677">Repeat</keyword>
<keyword id="KW-0964">Secreted</keyword>
<keyword id="KW-0732">Signal</keyword>
<keyword id="KW-0768">Sushi</keyword>
<sequence length="569" mass="64419">MLLLFSVILISWVSTVGGEGTLCDFPKIHHGFLYDEEDYNPFSQVPTGEVFYYSCEYNFVSPSKSFWTRITCTEEGWSPTPKCLRMCSFPFVKNGHSESSGLIHLEGDTVQIICNTGYSLQNNEKNISCVERGWSTPPICSFTKGECHVPILEANVDAQPKKESYKVGDVLKFSCRKNLIRVGSDSVQCYQFGWSPNFPTCKGQVRSCGPPPQLSNGEVKEIRKEEYGHNEVVEYDCNPNFIINGPKKIQCVDGEWTTLPTCVEQVKTCGYIPELEYGYVQPSVPPYQHGVSVEVNCRNEYAMIGNNMITCINGIWTELPMCVATHQLKRCKIAGVNIKTLLKLSGKEFNHNSRIRYRCSDIFRYRHSVCINGKWNPEVDCTEKREQFCPPPPQIPNAQNMTTTVNYQDGEKVAVLCKENYLLPEAKEIVCKDGRWQSLPRCVESTAYCGPPPSINNGDTTSFPLSVYPPGSTVTYRCQSFYKLQGSVTVTCRNKQWSEPPRCLDPCVVSEENMNKNNIQLKWRNDGKLYAKTGDAVEFQCKFPHKAMISSPPFRAICQEGKFEYPICE</sequence>
<name>FHR5_HUMAN</name>
<accession>Q9BXR6</accession>
<accession>Q2NKK2</accession>
<feature type="signal peptide" evidence="1">
    <location>
        <begin position="1"/>
        <end position="18"/>
    </location>
</feature>
<feature type="chain" id="PRO_0000005900" description="Complement factor H-related protein 5">
    <location>
        <begin position="19"/>
        <end position="569"/>
    </location>
</feature>
<feature type="domain" description="Sushi 1" evidence="2">
    <location>
        <begin position="23"/>
        <end position="83"/>
    </location>
</feature>
<feature type="domain" description="Sushi 2" evidence="2">
    <location>
        <begin position="85"/>
        <end position="142"/>
    </location>
</feature>
<feature type="domain" description="Sushi 3" evidence="2">
    <location>
        <begin position="145"/>
        <end position="203"/>
    </location>
</feature>
<feature type="domain" description="Sushi 4" evidence="2">
    <location>
        <begin position="206"/>
        <end position="264"/>
    </location>
</feature>
<feature type="domain" description="Sushi 5" evidence="2">
    <location>
        <begin position="267"/>
        <end position="324"/>
    </location>
</feature>
<feature type="domain" description="Sushi 6" evidence="2">
    <location>
        <begin position="329"/>
        <end position="383"/>
    </location>
</feature>
<feature type="domain" description="Sushi 7" evidence="2">
    <location>
        <begin position="387"/>
        <end position="444"/>
    </location>
</feature>
<feature type="domain" description="Sushi 8" evidence="2">
    <location>
        <begin position="447"/>
        <end position="505"/>
    </location>
</feature>
<feature type="domain" description="Sushi 9" evidence="2">
    <location>
        <begin position="507"/>
        <end position="569"/>
    </location>
</feature>
<feature type="glycosylation site" description="N-linked (GlcNAc...) asparagine" evidence="1">
    <location>
        <position position="126"/>
    </location>
</feature>
<feature type="glycosylation site" description="N-linked (GlcNAc...) asparagine" evidence="1">
    <location>
        <position position="400"/>
    </location>
</feature>
<feature type="disulfide bond" evidence="2">
    <location>
        <begin position="23"/>
        <end position="72"/>
    </location>
</feature>
<feature type="disulfide bond" evidence="2">
    <location>
        <begin position="55"/>
        <end position="83"/>
    </location>
</feature>
<feature type="disulfide bond" evidence="2">
    <location>
        <begin position="87"/>
        <end position="129"/>
    </location>
</feature>
<feature type="disulfide bond" evidence="2">
    <location>
        <begin position="114"/>
        <end position="140"/>
    </location>
</feature>
<feature type="disulfide bond" evidence="2">
    <location>
        <begin position="147"/>
        <end position="189"/>
    </location>
</feature>
<feature type="disulfide bond" evidence="2">
    <location>
        <begin position="175"/>
        <end position="201"/>
    </location>
</feature>
<feature type="disulfide bond" evidence="2">
    <location>
        <begin position="208"/>
        <end position="251"/>
    </location>
</feature>
<feature type="disulfide bond" evidence="2">
    <location>
        <begin position="237"/>
        <end position="262"/>
    </location>
</feature>
<feature type="disulfide bond" evidence="2">
    <location>
        <begin position="269"/>
        <end position="311"/>
    </location>
</feature>
<feature type="disulfide bond" evidence="2">
    <location>
        <begin position="297"/>
        <end position="322"/>
    </location>
</feature>
<feature type="disulfide bond" evidence="2">
    <location>
        <begin position="331"/>
        <end position="370"/>
    </location>
</feature>
<feature type="disulfide bond" evidence="2">
    <location>
        <begin position="359"/>
        <end position="381"/>
    </location>
</feature>
<feature type="disulfide bond" evidence="2">
    <location>
        <begin position="389"/>
        <end position="431"/>
    </location>
</feature>
<feature type="disulfide bond" evidence="2">
    <location>
        <begin position="417"/>
        <end position="442"/>
    </location>
</feature>
<feature type="disulfide bond" evidence="2">
    <location>
        <begin position="449"/>
        <end position="492"/>
    </location>
</feature>
<feature type="disulfide bond" evidence="2">
    <location>
        <begin position="478"/>
        <end position="503"/>
    </location>
</feature>
<feature type="disulfide bond" evidence="2">
    <location>
        <begin position="507"/>
        <end position="558"/>
    </location>
</feature>
<feature type="disulfide bond" evidence="2">
    <location>
        <begin position="541"/>
        <end position="568"/>
    </location>
</feature>
<feature type="sequence variant" id="VAR_048818" description="In dbSNP:rs12097550.">
    <original>P</original>
    <variation>S</variation>
    <location>
        <position position="46"/>
    </location>
</feature>
<feature type="sequence variant" id="VAR_069090" description="Found in patients with atypical hemolytic uremic syndrome; dbSNP:rs318240754." evidence="7">
    <original>L</original>
    <variation>R</variation>
    <location>
        <position position="105"/>
    </location>
</feature>
<feature type="sequence variant" id="VAR_069091" description="Found in patients with atypical hemolytic uremic syndrome; dbSNP:rs318240755." evidence="7">
    <original>S</original>
    <variation>T</variation>
    <location>
        <position position="195"/>
    </location>
</feature>
<feature type="sequence variant" id="VAR_035827" description="In a breast cancer sample; somatic mutation; dbSNP:rs147488267." evidence="3">
    <original>N</original>
    <variation>S</variation>
    <location>
        <position position="216"/>
    </location>
</feature>
<feature type="sequence variant" id="VAR_063652" description="Found in a patient with atypical hemolytic uremic syndrome; dbSNP:rs318240756." evidence="4">
    <original>Y</original>
    <variation>N</variation>
    <location>
        <position position="277"/>
    </location>
</feature>
<feature type="sequence variant" id="VAR_048819" description="In dbSNP:rs35662416.">
    <original>R</original>
    <variation>H</variation>
    <location>
        <position position="356"/>
    </location>
</feature>
<feature type="sequence variant" id="VAR_063653" description="Found in patients with atypical hemolytic uremic syndrome; dbSNP:rs111327589." evidence="4">
    <original>V</original>
    <variation>L</variation>
    <location>
        <position position="379"/>
    </location>
</feature>
<feature type="sequence variant" id="VAR_069092" description="Found in patients with atypical hemolytic uremic syndrome; dbSNP:rs201265664." evidence="7">
    <original>W</original>
    <variation>C</variation>
    <location>
        <position position="436"/>
    </location>
</feature>
<feature type="sequence variant" id="VAR_048820" description="In dbSNP:rs35957013.">
    <original>L</original>
    <variation>I</variation>
    <location>
        <position position="521"/>
    </location>
</feature>
<feature type="sequence variant" id="VAR_048821" description="In dbSNP:rs16840956.">
    <original>L</original>
    <variation>R</variation>
    <location>
        <position position="529"/>
    </location>
</feature>
<dbReference type="EMBL" id="AF295327">
    <property type="protein sequence ID" value="AAK15619.1"/>
    <property type="molecule type" value="mRNA"/>
</dbReference>
<dbReference type="EMBL" id="BC111773">
    <property type="protein sequence ID" value="AAI11774.1"/>
    <property type="molecule type" value="mRNA"/>
</dbReference>
<dbReference type="CCDS" id="CCDS1387.1"/>
<dbReference type="RefSeq" id="NP_110414.1">
    <property type="nucleotide sequence ID" value="NM_030787.4"/>
</dbReference>
<dbReference type="SMR" id="Q9BXR6"/>
<dbReference type="BioGRID" id="123503">
    <property type="interactions" value="22"/>
</dbReference>
<dbReference type="FunCoup" id="Q9BXR6">
    <property type="interactions" value="128"/>
</dbReference>
<dbReference type="IntAct" id="Q9BXR6">
    <property type="interactions" value="24"/>
</dbReference>
<dbReference type="MINT" id="Q9BXR6"/>
<dbReference type="STRING" id="9606.ENSP00000256785"/>
<dbReference type="GlyConnect" id="1155">
    <property type="glycosylation" value="3 N-Linked glycans (2 sites)"/>
</dbReference>
<dbReference type="GlyCosmos" id="Q9BXR6">
    <property type="glycosylation" value="3 sites, 5 glycans"/>
</dbReference>
<dbReference type="GlyGen" id="Q9BXR6">
    <property type="glycosylation" value="3 sites, 22 N-linked glycans (2 sites), 2 O-linked glycans (1 site)"/>
</dbReference>
<dbReference type="iPTMnet" id="Q9BXR6"/>
<dbReference type="PhosphoSitePlus" id="Q9BXR6"/>
<dbReference type="BioMuta" id="CFHR5"/>
<dbReference type="DMDM" id="23396597"/>
<dbReference type="jPOST" id="Q9BXR6"/>
<dbReference type="MassIVE" id="Q9BXR6"/>
<dbReference type="PaxDb" id="9606-ENSP00000256785"/>
<dbReference type="PeptideAtlas" id="Q9BXR6"/>
<dbReference type="ProteomicsDB" id="79486"/>
<dbReference type="Antibodypedia" id="34475">
    <property type="antibodies" value="199 antibodies from 22 providers"/>
</dbReference>
<dbReference type="DNASU" id="81494"/>
<dbReference type="Ensembl" id="ENST00000256785.5">
    <property type="protein sequence ID" value="ENSP00000256785.4"/>
    <property type="gene ID" value="ENSG00000134389.11"/>
</dbReference>
<dbReference type="Ensembl" id="ENST00000709541.1">
    <property type="protein sequence ID" value="ENSP00000517752.1"/>
    <property type="gene ID" value="ENSG00000292002.1"/>
</dbReference>
<dbReference type="GeneID" id="81494"/>
<dbReference type="KEGG" id="hsa:81494"/>
<dbReference type="MANE-Select" id="ENST00000256785.5">
    <property type="protein sequence ID" value="ENSP00000256785.4"/>
    <property type="RefSeq nucleotide sequence ID" value="NM_030787.4"/>
    <property type="RefSeq protein sequence ID" value="NP_110414.1"/>
</dbReference>
<dbReference type="UCSC" id="uc001gts.5">
    <property type="organism name" value="human"/>
</dbReference>
<dbReference type="AGR" id="HGNC:24668"/>
<dbReference type="CTD" id="81494"/>
<dbReference type="DisGeNET" id="81494"/>
<dbReference type="GeneCards" id="CFHR5"/>
<dbReference type="GeneReviews" id="CFHR5"/>
<dbReference type="HGNC" id="HGNC:24668">
    <property type="gene designation" value="CFHR5"/>
</dbReference>
<dbReference type="HPA" id="ENSG00000134389">
    <property type="expression patterns" value="Tissue enriched (liver)"/>
</dbReference>
<dbReference type="MalaCards" id="CFHR5"/>
<dbReference type="MIM" id="608593">
    <property type="type" value="gene"/>
</dbReference>
<dbReference type="MIM" id="614809">
    <property type="type" value="phenotype"/>
</dbReference>
<dbReference type="neXtProt" id="NX_Q9BXR6"/>
<dbReference type="OpenTargets" id="ENSG00000134389"/>
<dbReference type="Orphanet" id="329931">
    <property type="disease" value="C3 glomerulonephritis"/>
</dbReference>
<dbReference type="PharmGKB" id="PA134937417"/>
<dbReference type="VEuPathDB" id="HostDB:ENSG00000134389"/>
<dbReference type="eggNOG" id="ENOG502RTVY">
    <property type="taxonomic scope" value="Eukaryota"/>
</dbReference>
<dbReference type="GeneTree" id="ENSGT00940000154386"/>
<dbReference type="HOGENOM" id="CLU_020107_6_0_1"/>
<dbReference type="InParanoid" id="Q9BXR6"/>
<dbReference type="OMA" id="GNNMITC"/>
<dbReference type="OrthoDB" id="9984531at2759"/>
<dbReference type="PAN-GO" id="Q9BXR6">
    <property type="GO annotations" value="3 GO annotations based on evolutionary models"/>
</dbReference>
<dbReference type="PhylomeDB" id="Q9BXR6"/>
<dbReference type="TreeFam" id="TF326157"/>
<dbReference type="PathwayCommons" id="Q9BXR6"/>
<dbReference type="Reactome" id="R-HSA-977606">
    <property type="pathway name" value="Regulation of Complement cascade"/>
</dbReference>
<dbReference type="SignaLink" id="Q9BXR6"/>
<dbReference type="BioGRID-ORCS" id="81494">
    <property type="hits" value="8 hits in 1135 CRISPR screens"/>
</dbReference>
<dbReference type="GeneWiki" id="CFHR5"/>
<dbReference type="GenomeRNAi" id="81494"/>
<dbReference type="Pharos" id="Q9BXR6">
    <property type="development level" value="Tbio"/>
</dbReference>
<dbReference type="PRO" id="PR:Q9BXR6"/>
<dbReference type="Proteomes" id="UP000005640">
    <property type="component" value="Chromosome 1"/>
</dbReference>
<dbReference type="RNAct" id="Q9BXR6">
    <property type="molecule type" value="protein"/>
</dbReference>
<dbReference type="Bgee" id="ENSG00000134389">
    <property type="expression patterns" value="Expressed in right lobe of liver and 14 other cell types or tissues"/>
</dbReference>
<dbReference type="GO" id="GO:0005576">
    <property type="term" value="C:extracellular region"/>
    <property type="evidence" value="ECO:0000304"/>
    <property type="project" value="Reactome"/>
</dbReference>
<dbReference type="GO" id="GO:0005615">
    <property type="term" value="C:extracellular space"/>
    <property type="evidence" value="ECO:0000318"/>
    <property type="project" value="GO_Central"/>
</dbReference>
<dbReference type="GO" id="GO:0032991">
    <property type="term" value="C:protein-containing complex"/>
    <property type="evidence" value="ECO:0000315"/>
    <property type="project" value="UniProtKB"/>
</dbReference>
<dbReference type="GO" id="GO:0001851">
    <property type="term" value="F:complement component C3b binding"/>
    <property type="evidence" value="ECO:0000318"/>
    <property type="project" value="GO_Central"/>
</dbReference>
<dbReference type="GO" id="GO:0042802">
    <property type="term" value="F:identical protein binding"/>
    <property type="evidence" value="ECO:0000353"/>
    <property type="project" value="UniProtKB"/>
</dbReference>
<dbReference type="GO" id="GO:0046982">
    <property type="term" value="F:protein heterodimerization activity"/>
    <property type="evidence" value="ECO:0000314"/>
    <property type="project" value="UniProtKB"/>
</dbReference>
<dbReference type="GO" id="GO:0006956">
    <property type="term" value="P:complement activation"/>
    <property type="evidence" value="ECO:0000318"/>
    <property type="project" value="GO_Central"/>
</dbReference>
<dbReference type="GO" id="GO:0006957">
    <property type="term" value="P:complement activation, alternative pathway"/>
    <property type="evidence" value="ECO:0000303"/>
    <property type="project" value="UniProtKB"/>
</dbReference>
<dbReference type="GO" id="GO:0051838">
    <property type="term" value="P:cytolysis by host of symbiont cells"/>
    <property type="evidence" value="ECO:0000315"/>
    <property type="project" value="UniProtKB"/>
</dbReference>
<dbReference type="GO" id="GO:0032091">
    <property type="term" value="P:negative regulation of protein binding"/>
    <property type="evidence" value="ECO:0000314"/>
    <property type="project" value="UniProtKB"/>
</dbReference>
<dbReference type="CDD" id="cd00033">
    <property type="entry name" value="CCP"/>
    <property type="match status" value="6"/>
</dbReference>
<dbReference type="FunFam" id="2.10.70.10:FF:000041">
    <property type="entry name" value="Complement factor H"/>
    <property type="match status" value="1"/>
</dbReference>
<dbReference type="FunFam" id="2.10.70.10:FF:000026">
    <property type="entry name" value="Complement inhibitory factor H"/>
    <property type="match status" value="3"/>
</dbReference>
<dbReference type="FunFam" id="2.10.70.10:FF:000054">
    <property type="entry name" value="Complement inhibitory factor H"/>
    <property type="match status" value="1"/>
</dbReference>
<dbReference type="FunFam" id="2.10.70.10:FF:000060">
    <property type="entry name" value="Complement inhibitory factor H"/>
    <property type="match status" value="1"/>
</dbReference>
<dbReference type="Gene3D" id="2.10.70.10">
    <property type="entry name" value="Complement Module, domain 1"/>
    <property type="match status" value="9"/>
</dbReference>
<dbReference type="InterPro" id="IPR051503">
    <property type="entry name" value="ComplSys_Reg/VirEntry_Med"/>
</dbReference>
<dbReference type="InterPro" id="IPR035976">
    <property type="entry name" value="Sushi/SCR/CCP_sf"/>
</dbReference>
<dbReference type="InterPro" id="IPR000436">
    <property type="entry name" value="Sushi_SCR_CCP_dom"/>
</dbReference>
<dbReference type="PANTHER" id="PTHR45785">
    <property type="entry name" value="COMPLEMENT FACTOR H-RELATED"/>
    <property type="match status" value="1"/>
</dbReference>
<dbReference type="PANTHER" id="PTHR45785:SF9">
    <property type="entry name" value="COMPLEMENT FACTOR H-RELATED PROTEIN 5"/>
    <property type="match status" value="1"/>
</dbReference>
<dbReference type="Pfam" id="PF00084">
    <property type="entry name" value="Sushi"/>
    <property type="match status" value="7"/>
</dbReference>
<dbReference type="SMART" id="SM00032">
    <property type="entry name" value="CCP"/>
    <property type="match status" value="9"/>
</dbReference>
<dbReference type="SUPFAM" id="SSF57535">
    <property type="entry name" value="Complement control module/SCR domain"/>
    <property type="match status" value="8"/>
</dbReference>
<dbReference type="PROSITE" id="PS50923">
    <property type="entry name" value="SUSHI"/>
    <property type="match status" value="7"/>
</dbReference>
<protein>
    <recommendedName>
        <fullName>Complement factor H-related protein 5</fullName>
        <shortName>FHR-5</shortName>
    </recommendedName>
</protein>